<accession>Q9LV79</accession>
<dbReference type="EMBL" id="AB019236">
    <property type="protein sequence ID" value="BAA97311.1"/>
    <property type="molecule type" value="Genomic_DNA"/>
</dbReference>
<dbReference type="EMBL" id="CP002688">
    <property type="protein sequence ID" value="AED97979.1"/>
    <property type="molecule type" value="Genomic_DNA"/>
</dbReference>
<dbReference type="RefSeq" id="NP_201304.1">
    <molecule id="Q9LV79-1"/>
    <property type="nucleotide sequence ID" value="NM_125898.2"/>
</dbReference>
<dbReference type="SMR" id="Q9LV79"/>
<dbReference type="FunCoup" id="Q9LV79">
    <property type="interactions" value="260"/>
</dbReference>
<dbReference type="STRING" id="3702.Q9LV79"/>
<dbReference type="PaxDb" id="3702-AT5G64990.2"/>
<dbReference type="ProteomicsDB" id="236340">
    <molecule id="Q9LV79-1"/>
</dbReference>
<dbReference type="EnsemblPlants" id="AT5G64990.1">
    <molecule id="Q9LV79-1"/>
    <property type="protein sequence ID" value="AT5G64990.1"/>
    <property type="gene ID" value="AT5G64990"/>
</dbReference>
<dbReference type="GeneID" id="836623"/>
<dbReference type="Gramene" id="AT5G64990.1">
    <molecule id="Q9LV79-1"/>
    <property type="protein sequence ID" value="AT5G64990.1"/>
    <property type="gene ID" value="AT5G64990"/>
</dbReference>
<dbReference type="KEGG" id="ath:AT5G64990"/>
<dbReference type="Araport" id="AT5G64990"/>
<dbReference type="TAIR" id="AT5G64990">
    <property type="gene designation" value="RABH1A"/>
</dbReference>
<dbReference type="eggNOG" id="KOG0094">
    <property type="taxonomic scope" value="Eukaryota"/>
</dbReference>
<dbReference type="HOGENOM" id="CLU_041217_10_2_1"/>
<dbReference type="InParanoid" id="Q9LV79"/>
<dbReference type="OMA" id="WTRQEDL"/>
<dbReference type="OrthoDB" id="9989112at2759"/>
<dbReference type="PhylomeDB" id="Q9LV79"/>
<dbReference type="PRO" id="PR:Q9LV79"/>
<dbReference type="Proteomes" id="UP000006548">
    <property type="component" value="Chromosome 5"/>
</dbReference>
<dbReference type="ExpressionAtlas" id="Q9LV79">
    <property type="expression patterns" value="baseline and differential"/>
</dbReference>
<dbReference type="GO" id="GO:0000139">
    <property type="term" value="C:Golgi membrane"/>
    <property type="evidence" value="ECO:0007669"/>
    <property type="project" value="UniProtKB-SubCell"/>
</dbReference>
<dbReference type="GO" id="GO:0005525">
    <property type="term" value="F:GTP binding"/>
    <property type="evidence" value="ECO:0007669"/>
    <property type="project" value="UniProtKB-KW"/>
</dbReference>
<dbReference type="GO" id="GO:0003924">
    <property type="term" value="F:GTPase activity"/>
    <property type="evidence" value="ECO:0007669"/>
    <property type="project" value="InterPro"/>
</dbReference>
<dbReference type="GO" id="GO:0015031">
    <property type="term" value="P:protein transport"/>
    <property type="evidence" value="ECO:0007669"/>
    <property type="project" value="UniProtKB-KW"/>
</dbReference>
<dbReference type="GO" id="GO:0016192">
    <property type="term" value="P:vesicle-mediated transport"/>
    <property type="evidence" value="ECO:0007669"/>
    <property type="project" value="UniProtKB-KW"/>
</dbReference>
<dbReference type="CDD" id="cd01861">
    <property type="entry name" value="Rab6"/>
    <property type="match status" value="1"/>
</dbReference>
<dbReference type="FunFam" id="3.40.50.300:FF:002888">
    <property type="entry name" value="ras-related protein RABH1e isoform X2"/>
    <property type="match status" value="1"/>
</dbReference>
<dbReference type="Gene3D" id="3.40.50.300">
    <property type="entry name" value="P-loop containing nucleotide triphosphate hydrolases"/>
    <property type="match status" value="1"/>
</dbReference>
<dbReference type="InterPro" id="IPR027417">
    <property type="entry name" value="P-loop_NTPase"/>
</dbReference>
<dbReference type="InterPro" id="IPR050227">
    <property type="entry name" value="Rab"/>
</dbReference>
<dbReference type="InterPro" id="IPR005225">
    <property type="entry name" value="Small_GTP-bd"/>
</dbReference>
<dbReference type="InterPro" id="IPR001806">
    <property type="entry name" value="Small_GTPase"/>
</dbReference>
<dbReference type="NCBIfam" id="TIGR00231">
    <property type="entry name" value="small_GTP"/>
    <property type="match status" value="1"/>
</dbReference>
<dbReference type="PANTHER" id="PTHR47977">
    <property type="entry name" value="RAS-RELATED PROTEIN RAB"/>
    <property type="match status" value="1"/>
</dbReference>
<dbReference type="Pfam" id="PF00071">
    <property type="entry name" value="Ras"/>
    <property type="match status" value="1"/>
</dbReference>
<dbReference type="PRINTS" id="PR00449">
    <property type="entry name" value="RASTRNSFRMNG"/>
</dbReference>
<dbReference type="SMART" id="SM00175">
    <property type="entry name" value="RAB"/>
    <property type="match status" value="1"/>
</dbReference>
<dbReference type="SMART" id="SM00176">
    <property type="entry name" value="RAN"/>
    <property type="match status" value="1"/>
</dbReference>
<dbReference type="SMART" id="SM00173">
    <property type="entry name" value="RAS"/>
    <property type="match status" value="1"/>
</dbReference>
<dbReference type="SMART" id="SM00174">
    <property type="entry name" value="RHO"/>
    <property type="match status" value="1"/>
</dbReference>
<dbReference type="SUPFAM" id="SSF52540">
    <property type="entry name" value="P-loop containing nucleoside triphosphate hydrolases"/>
    <property type="match status" value="1"/>
</dbReference>
<dbReference type="PROSITE" id="PS51419">
    <property type="entry name" value="RAB"/>
    <property type="match status" value="1"/>
</dbReference>
<organism>
    <name type="scientific">Arabidopsis thaliana</name>
    <name type="common">Mouse-ear cress</name>
    <dbReference type="NCBI Taxonomy" id="3702"/>
    <lineage>
        <taxon>Eukaryota</taxon>
        <taxon>Viridiplantae</taxon>
        <taxon>Streptophyta</taxon>
        <taxon>Embryophyta</taxon>
        <taxon>Tracheophyta</taxon>
        <taxon>Spermatophyta</taxon>
        <taxon>Magnoliopsida</taxon>
        <taxon>eudicotyledons</taxon>
        <taxon>Gunneridae</taxon>
        <taxon>Pentapetalae</taxon>
        <taxon>rosids</taxon>
        <taxon>malvids</taxon>
        <taxon>Brassicales</taxon>
        <taxon>Brassicaceae</taxon>
        <taxon>Camelineae</taxon>
        <taxon>Arabidopsis</taxon>
    </lineage>
</organism>
<protein>
    <recommendedName>
        <fullName>Ras-related protein RABH1a</fullName>
        <shortName>AtRABH1a</shortName>
    </recommendedName>
</protein>
<sequence>MGDLGKGYKLVFLGDQGVGKTSIITCFMYGKFDTSYQATIGIDFLSKTTRYEDRTFRLQLWDTAGQERFKSLVPSYIRDSSVAVIVYDVASKQSFINTSKWIEEVRAERGSYVIIVLVGNKTDLVNKRQVSIEEGENKAREFGALFMETSAKAGFNIKPLFCKITSALQGNEAVSWTKQEDLVDVNLKPLMFSSQANHQQESNCSC</sequence>
<gene>
    <name type="primary">RABH1A</name>
    <name type="ordered locus">At5g64990</name>
    <name type="ORF">MXK3.22</name>
</gene>
<comment type="function">
    <text evidence="1">Protein transport. Regulator of membrane traffic from the Golgi apparatus towards the endoplasmic reticulum (ER) (By similarity).</text>
</comment>
<comment type="subcellular location">
    <subcellularLocation>
        <location evidence="2">Golgi apparatus membrane</location>
        <topology evidence="2">Lipid-anchor</topology>
    </subcellularLocation>
</comment>
<comment type="alternative products">
    <event type="alternative splicing"/>
    <isoform>
        <id>Q9LV79-1</id>
        <name>1</name>
        <sequence type="displayed"/>
    </isoform>
    <text>A number of isoforms are produced. According to EST sequences.</text>
</comment>
<comment type="similarity">
    <text evidence="2">Belongs to the small GTPase superfamily. Rab family.</text>
</comment>
<keyword id="KW-0025">Alternative splicing</keyword>
<keyword id="KW-0931">ER-Golgi transport</keyword>
<keyword id="KW-0333">Golgi apparatus</keyword>
<keyword id="KW-0342">GTP-binding</keyword>
<keyword id="KW-0449">Lipoprotein</keyword>
<keyword id="KW-0472">Membrane</keyword>
<keyword id="KW-0488">Methylation</keyword>
<keyword id="KW-0547">Nucleotide-binding</keyword>
<keyword id="KW-0636">Prenylation</keyword>
<keyword id="KW-0653">Protein transport</keyword>
<keyword id="KW-1185">Reference proteome</keyword>
<keyword id="KW-0813">Transport</keyword>
<proteinExistence type="inferred from homology"/>
<evidence type="ECO:0000250" key="1"/>
<evidence type="ECO:0000305" key="2"/>
<feature type="chain" id="PRO_0000407367" description="Ras-related protein RABH1a">
    <location>
        <begin position="1"/>
        <end position="206"/>
    </location>
</feature>
<feature type="short sequence motif" description="Effector region" evidence="1">
    <location>
        <begin position="36"/>
        <end position="44"/>
    </location>
</feature>
<feature type="binding site" evidence="1">
    <location>
        <begin position="14"/>
        <end position="21"/>
    </location>
    <ligand>
        <name>GTP</name>
        <dbReference type="ChEBI" id="CHEBI:37565"/>
    </ligand>
</feature>
<feature type="binding site" evidence="1">
    <location>
        <begin position="62"/>
        <end position="66"/>
    </location>
    <ligand>
        <name>GTP</name>
        <dbReference type="ChEBI" id="CHEBI:37565"/>
    </ligand>
</feature>
<feature type="binding site" evidence="1">
    <location>
        <begin position="120"/>
        <end position="123"/>
    </location>
    <ligand>
        <name>GTP</name>
        <dbReference type="ChEBI" id="CHEBI:37565"/>
    </ligand>
</feature>
<feature type="binding site" evidence="1">
    <location>
        <begin position="150"/>
        <end position="151"/>
    </location>
    <ligand>
        <name>GTP</name>
        <dbReference type="ChEBI" id="CHEBI:37565"/>
    </ligand>
</feature>
<feature type="modified residue" description="Cysteine methyl ester" evidence="1">
    <location>
        <position position="206"/>
    </location>
</feature>
<feature type="lipid moiety-binding region" description="S-geranylgeranyl cysteine" evidence="1">
    <location>
        <position position="204"/>
    </location>
</feature>
<feature type="lipid moiety-binding region" description="S-geranylgeranyl cysteine" evidence="1">
    <location>
        <position position="206"/>
    </location>
</feature>
<reference key="1">
    <citation type="journal article" date="2000" name="DNA Res.">
        <title>Structural analysis of Arabidopsis thaliana chromosome 5. X. Sequence features of the regions of 3,076,755 bp covered by sixty P1 and TAC clones.</title>
        <authorList>
            <person name="Sato S."/>
            <person name="Nakamura Y."/>
            <person name="Kaneko T."/>
            <person name="Katoh T."/>
            <person name="Asamizu E."/>
            <person name="Kotani H."/>
            <person name="Tabata S."/>
        </authorList>
    </citation>
    <scope>NUCLEOTIDE SEQUENCE [LARGE SCALE GENOMIC DNA]</scope>
    <source>
        <strain>cv. Columbia</strain>
    </source>
</reference>
<reference key="2">
    <citation type="journal article" date="2017" name="Plant J.">
        <title>Araport11: a complete reannotation of the Arabidopsis thaliana reference genome.</title>
        <authorList>
            <person name="Cheng C.Y."/>
            <person name="Krishnakumar V."/>
            <person name="Chan A.P."/>
            <person name="Thibaud-Nissen F."/>
            <person name="Schobel S."/>
            <person name="Town C.D."/>
        </authorList>
    </citation>
    <scope>GENOME REANNOTATION</scope>
    <source>
        <strain>cv. Columbia</strain>
    </source>
</reference>
<reference key="3">
    <citation type="journal article" date="2003" name="Plant Physiol.">
        <title>Analysis of the small GTPase gene superfamily of Arabidopsis.</title>
        <authorList>
            <person name="Vernoud V."/>
            <person name="Horton A.C."/>
            <person name="Yang Z."/>
            <person name="Nielsen E."/>
        </authorList>
    </citation>
    <scope>GENE FAMILY</scope>
    <scope>NOMENCLATURE</scope>
</reference>
<name>RAH1A_ARATH</name>